<dbReference type="EMBL" id="BC158275">
    <property type="protein sequence ID" value="AAI58276.1"/>
    <property type="molecule type" value="mRNA"/>
</dbReference>
<dbReference type="RefSeq" id="NP_001120002.1">
    <property type="nucleotide sequence ID" value="NM_001126530.1"/>
</dbReference>
<dbReference type="RefSeq" id="XP_012813990.1">
    <property type="nucleotide sequence ID" value="XM_012958536.3"/>
</dbReference>
<dbReference type="RefSeq" id="XP_012813991.1">
    <property type="nucleotide sequence ID" value="XM_012958537.3"/>
</dbReference>
<dbReference type="RefSeq" id="XP_017947421.1">
    <property type="nucleotide sequence ID" value="XM_018091932.2"/>
</dbReference>
<dbReference type="SMR" id="B0BM39"/>
<dbReference type="FunCoup" id="B0BM39">
    <property type="interactions" value="174"/>
</dbReference>
<dbReference type="STRING" id="8364.ENSXETP00000024092"/>
<dbReference type="GlyCosmos" id="B0BM39">
    <property type="glycosylation" value="1 site, No reported glycans"/>
</dbReference>
<dbReference type="PaxDb" id="8364-ENSXETP00000063035"/>
<dbReference type="GeneID" id="100144960"/>
<dbReference type="KEGG" id="xtr:100144960"/>
<dbReference type="AGR" id="Xenbase:XB-GENE-956624"/>
<dbReference type="CTD" id="10867"/>
<dbReference type="Xenbase" id="XB-GENE-956624">
    <property type="gene designation" value="tspan9"/>
</dbReference>
<dbReference type="eggNOG" id="KOG3882">
    <property type="taxonomic scope" value="Eukaryota"/>
</dbReference>
<dbReference type="HOGENOM" id="CLU_055524_4_3_1"/>
<dbReference type="InParanoid" id="B0BM39"/>
<dbReference type="OrthoDB" id="432835at2759"/>
<dbReference type="TreeFam" id="TF352892"/>
<dbReference type="Proteomes" id="UP000008143">
    <property type="component" value="Chromosome 3"/>
</dbReference>
<dbReference type="Bgee" id="ENSXETG00000016985">
    <property type="expression patterns" value="Expressed in heart and 14 other cell types or tissues"/>
</dbReference>
<dbReference type="GO" id="GO:0016020">
    <property type="term" value="C:membrane"/>
    <property type="evidence" value="ECO:0007669"/>
    <property type="project" value="UniProtKB-SubCell"/>
</dbReference>
<dbReference type="CDD" id="cd03165">
    <property type="entry name" value="NET-5_like_LEL"/>
    <property type="match status" value="1"/>
</dbReference>
<dbReference type="FunFam" id="1.10.1450.10:FF:000008">
    <property type="entry name" value="Tetraspanin"/>
    <property type="match status" value="1"/>
</dbReference>
<dbReference type="Gene3D" id="1.10.1450.10">
    <property type="entry name" value="Tetraspanin"/>
    <property type="match status" value="1"/>
</dbReference>
<dbReference type="InterPro" id="IPR018499">
    <property type="entry name" value="Tetraspanin/Peripherin"/>
</dbReference>
<dbReference type="InterPro" id="IPR000301">
    <property type="entry name" value="Tetraspanin_animals"/>
</dbReference>
<dbReference type="InterPro" id="IPR018503">
    <property type="entry name" value="Tetraspanin_CS"/>
</dbReference>
<dbReference type="InterPro" id="IPR008952">
    <property type="entry name" value="Tetraspanin_EC2_sf"/>
</dbReference>
<dbReference type="PANTHER" id="PTHR19282">
    <property type="entry name" value="TETRASPANIN"/>
    <property type="match status" value="1"/>
</dbReference>
<dbReference type="PANTHER" id="PTHR19282:SF41">
    <property type="entry name" value="TETRASPANIN-9"/>
    <property type="match status" value="1"/>
</dbReference>
<dbReference type="Pfam" id="PF00335">
    <property type="entry name" value="Tetraspanin"/>
    <property type="match status" value="1"/>
</dbReference>
<dbReference type="PIRSF" id="PIRSF002419">
    <property type="entry name" value="Tetraspanin"/>
    <property type="match status" value="1"/>
</dbReference>
<dbReference type="PRINTS" id="PR00259">
    <property type="entry name" value="TMFOUR"/>
</dbReference>
<dbReference type="SUPFAM" id="SSF48652">
    <property type="entry name" value="Tetraspanin"/>
    <property type="match status" value="1"/>
</dbReference>
<dbReference type="PROSITE" id="PS00421">
    <property type="entry name" value="TM4_1"/>
    <property type="match status" value="1"/>
</dbReference>
<protein>
    <recommendedName>
        <fullName>Tetraspanin-9</fullName>
        <shortName>Tspan-9</shortName>
    </recommendedName>
</protein>
<keyword id="KW-0325">Glycoprotein</keyword>
<keyword id="KW-0472">Membrane</keyword>
<keyword id="KW-1185">Reference proteome</keyword>
<keyword id="KW-0812">Transmembrane</keyword>
<keyword id="KW-1133">Transmembrane helix</keyword>
<name>TSN9_XENTR</name>
<feature type="chain" id="PRO_0000375886" description="Tetraspanin-9">
    <location>
        <begin position="1"/>
        <end position="239"/>
    </location>
</feature>
<feature type="topological domain" description="Cytoplasmic" evidence="2">
    <location>
        <begin position="1"/>
        <end position="13"/>
    </location>
</feature>
<feature type="transmembrane region" description="Helical" evidence="2">
    <location>
        <begin position="14"/>
        <end position="34"/>
    </location>
</feature>
<feature type="topological domain" description="Extracellular" evidence="2">
    <location>
        <begin position="35"/>
        <end position="55"/>
    </location>
</feature>
<feature type="transmembrane region" description="Helical" evidence="2">
    <location>
        <begin position="56"/>
        <end position="76"/>
    </location>
</feature>
<feature type="topological domain" description="Cytoplasmic" evidence="2">
    <location>
        <begin position="77"/>
        <end position="85"/>
    </location>
</feature>
<feature type="transmembrane region" description="Helical" evidence="2">
    <location>
        <begin position="86"/>
        <end position="106"/>
    </location>
</feature>
<feature type="topological domain" description="Extracellular" evidence="2">
    <location>
        <begin position="107"/>
        <end position="203"/>
    </location>
</feature>
<feature type="transmembrane region" description="Helical" evidence="2">
    <location>
        <begin position="204"/>
        <end position="224"/>
    </location>
</feature>
<feature type="topological domain" description="Cytoplasmic" evidence="2">
    <location>
        <begin position="225"/>
        <end position="239"/>
    </location>
</feature>
<feature type="glycosylation site" description="N-linked (GlcNAc...) asparagine" evidence="2">
    <location>
        <position position="180"/>
    </location>
</feature>
<evidence type="ECO:0000250" key="1"/>
<evidence type="ECO:0000255" key="2"/>
<evidence type="ECO:0000305" key="3"/>
<gene>
    <name type="primary">tspan9</name>
</gene>
<sequence>MARGCLCCLKYMMFLFNLIFWLCGCGLLGVGIWLSVSQGNFATFSPSFPSLSAANLVIAIGTIVMVTGFLGCLGAIKENKCLLLSFFIILLIILLAELILLILFFVYMDKVNENAKQDLKDGLLLYNTENNVGLKNAWNIIQAEMHCCGVTDYTDWYPVLGENTVPDRCCMENSQDCGHNSTSLVWKTGCYEKVKMWFDDNKHVLGTIGMCILIIQILGMAFSMTLFQQIHRTGKKYDA</sequence>
<proteinExistence type="evidence at transcript level"/>
<organism>
    <name type="scientific">Xenopus tropicalis</name>
    <name type="common">Western clawed frog</name>
    <name type="synonym">Silurana tropicalis</name>
    <dbReference type="NCBI Taxonomy" id="8364"/>
    <lineage>
        <taxon>Eukaryota</taxon>
        <taxon>Metazoa</taxon>
        <taxon>Chordata</taxon>
        <taxon>Craniata</taxon>
        <taxon>Vertebrata</taxon>
        <taxon>Euteleostomi</taxon>
        <taxon>Amphibia</taxon>
        <taxon>Batrachia</taxon>
        <taxon>Anura</taxon>
        <taxon>Pipoidea</taxon>
        <taxon>Pipidae</taxon>
        <taxon>Xenopodinae</taxon>
        <taxon>Xenopus</taxon>
        <taxon>Silurana</taxon>
    </lineage>
</organism>
<reference key="1">
    <citation type="submission" date="2008-01" db="EMBL/GenBank/DDBJ databases">
        <authorList>
            <consortium name="NIH - Xenopus Gene Collection (XGC) project"/>
        </authorList>
    </citation>
    <scope>NUCLEOTIDE SEQUENCE [LARGE SCALE MRNA]</scope>
    <source>
        <tissue>Testis</tissue>
    </source>
</reference>
<accession>B0BM39</accession>
<comment type="subcellular location">
    <subcellularLocation>
        <location evidence="1">Membrane</location>
        <topology evidence="1">Multi-pass membrane protein</topology>
    </subcellularLocation>
</comment>
<comment type="similarity">
    <text evidence="3">Belongs to the tetraspanin (TM4SF) family.</text>
</comment>